<proteinExistence type="evidence at protein level"/>
<accession>Q93RN4</accession>
<accession>Q663M5</accession>
<name>YOPT_YERPS</name>
<feature type="chain" id="PRO_0000192514" description="Cysteine protease YopT">
    <location>
        <begin position="1"/>
        <end position="322"/>
    </location>
</feature>
<feature type="active site" evidence="1">
    <location>
        <position position="139"/>
    </location>
</feature>
<feature type="active site" evidence="1">
    <location>
        <position position="258"/>
    </location>
</feature>
<feature type="active site" evidence="1">
    <location>
        <position position="274"/>
    </location>
</feature>
<feature type="mutagenesis site" description="Abolishes the cleavage of ARHA." evidence="2">
    <original>C</original>
    <variation>S</variation>
    <location>
        <position position="139"/>
    </location>
</feature>
<feature type="sequence conflict" description="In Ref. 1; CAC39270." evidence="3" ref="1">
    <original>N</original>
    <variation>D</variation>
    <location>
        <position position="2"/>
    </location>
</feature>
<feature type="sequence conflict" description="In Ref. 1; CAC39270." evidence="3" ref="1">
    <original>IR</original>
    <variation>DQ</variation>
    <location>
        <begin position="147"/>
        <end position="148"/>
    </location>
</feature>
<gene>
    <name type="primary">yopT</name>
    <name type="ordered locus">pYV0041</name>
</gene>
<protein>
    <recommendedName>
        <fullName>Cysteine protease YopT</fullName>
        <ecNumber>3.4.22.-</ecNumber>
    </recommendedName>
</protein>
<keyword id="KW-0378">Hydrolase</keyword>
<keyword id="KW-0614">Plasmid</keyword>
<keyword id="KW-0645">Protease</keyword>
<keyword id="KW-0964">Secreted</keyword>
<keyword id="KW-0788">Thiol protease</keyword>
<keyword id="KW-0843">Virulence</keyword>
<evidence type="ECO:0000250" key="1"/>
<evidence type="ECO:0000269" key="2">
    <source>
    </source>
</evidence>
<evidence type="ECO:0000305" key="3"/>
<reference key="1">
    <citation type="journal article" date="2001" name="Syst. Appl. Microbiol.">
        <title>A highly specific one-step PCR - assay for the rapid discrimination of enteropathogenic Yersinia enterocolitica from pathogenic Yersinia pseudotuberculosis and Yersinia pestis.</title>
        <authorList>
            <person name="Arnold T."/>
            <person name="Hensel A."/>
            <person name="Hagen R."/>
            <person name="Aleksic S."/>
            <person name="Neubauer H."/>
            <person name="Scholz H.C."/>
        </authorList>
    </citation>
    <scope>NUCLEOTIDE SEQUENCE [GENOMIC DNA]</scope>
    <source>
        <strain>Y36</strain>
        <plasmid>pYV36</plasmid>
    </source>
</reference>
<reference key="2">
    <citation type="journal article" date="2004" name="Proc. Natl. Acad. Sci. U.S.A.">
        <title>Insights into the evolution of Yersinia pestis through whole-genome comparison with Yersinia pseudotuberculosis.</title>
        <authorList>
            <person name="Chain P.S.G."/>
            <person name="Carniel E."/>
            <person name="Larimer F.W."/>
            <person name="Lamerdin J."/>
            <person name="Stoutland P.O."/>
            <person name="Regala W.M."/>
            <person name="Georgescu A.M."/>
            <person name="Vergez L.M."/>
            <person name="Land M.L."/>
            <person name="Motin V.L."/>
            <person name="Brubaker R.R."/>
            <person name="Fowler J."/>
            <person name="Hinnebusch J."/>
            <person name="Marceau M."/>
            <person name="Medigue C."/>
            <person name="Simonet M."/>
            <person name="Chenal-Francisque V."/>
            <person name="Souza B."/>
            <person name="Dacheux D."/>
            <person name="Elliott J.M."/>
            <person name="Derbise A."/>
            <person name="Hauser L.J."/>
            <person name="Garcia E."/>
        </authorList>
    </citation>
    <scope>NUCLEOTIDE SEQUENCE [LARGE SCALE GENOMIC DNA]</scope>
    <source>
        <strain>IP32953</strain>
        <plasmid>pYV</plasmid>
    </source>
</reference>
<reference key="3">
    <citation type="journal article" date="2003" name="Proc. Natl. Acad. Sci. U.S.A.">
        <title>Biochemical characterization of the Yersinia YopT protease: cleavage site and recognition elements in Rho GTPases.</title>
        <authorList>
            <person name="Shao F."/>
            <person name="Vacratsis P.O."/>
            <person name="Bao Z."/>
            <person name="Bowers K.E."/>
            <person name="Fierke C.A."/>
            <person name="Dixon J.E."/>
        </authorList>
    </citation>
    <scope>BIOCHEMICAL CHARACTERIZATION</scope>
    <scope>FUNCTION</scope>
    <scope>MUTAGENESIS OF CYS-139</scope>
</reference>
<geneLocation type="plasmid">
    <name>pYV36</name>
</geneLocation>
<geneLocation type="plasmid">
    <name>pYV</name>
</geneLocation>
<comment type="function">
    <text evidence="2">Cysteine protease, which is translocated into infected cells and plays a central role in pathogenesis by cleaving the C-terminus end of the human small GTPase RhoA/ARHA, a regulator of cytoskeleton. Once cleaved, ARHA loses its lipid modification, and is released from the cell membrane, leading to the subsequent disruption of actin cytoskeleton of the host cell.</text>
</comment>
<comment type="subunit">
    <text>Interacts with human ARHA.</text>
</comment>
<comment type="subcellular location">
    <subcellularLocation>
        <location evidence="1">Secreted</location>
    </subcellularLocation>
    <text evidence="1">In infected cells, it is cytoplasmic. Translocated into the host cell by the type III secretion apparatus with the help of the SycT chaperone (By similarity).</text>
</comment>
<comment type="similarity">
    <text evidence="3">Belongs to the peptidase C58 family.</text>
</comment>
<organism>
    <name type="scientific">Yersinia pseudotuberculosis serotype I (strain IP32953)</name>
    <dbReference type="NCBI Taxonomy" id="273123"/>
    <lineage>
        <taxon>Bacteria</taxon>
        <taxon>Pseudomonadati</taxon>
        <taxon>Pseudomonadota</taxon>
        <taxon>Gammaproteobacteria</taxon>
        <taxon>Enterobacterales</taxon>
        <taxon>Yersiniaceae</taxon>
        <taxon>Yersinia</taxon>
    </lineage>
</organism>
<dbReference type="EC" id="3.4.22.-"/>
<dbReference type="EMBL" id="AJ304833">
    <property type="protein sequence ID" value="CAC39270.1"/>
    <property type="molecule type" value="Genomic_DNA"/>
</dbReference>
<dbReference type="EMBL" id="BX936399">
    <property type="protein sequence ID" value="CAF25384.1"/>
    <property type="molecule type" value="Genomic_DNA"/>
</dbReference>
<dbReference type="RefSeq" id="WP_011191374.1">
    <property type="nucleotide sequence ID" value="NC_006153.2"/>
</dbReference>
<dbReference type="SMR" id="Q93RN4"/>
<dbReference type="MEROPS" id="C58.001"/>
<dbReference type="KEGG" id="ypo:BZ17_4198"/>
<dbReference type="KEGG" id="yps:pYV0041"/>
<dbReference type="PATRIC" id="fig|273123.14.peg.4424"/>
<dbReference type="Proteomes" id="UP000001011">
    <property type="component" value="Plasmid pYV"/>
</dbReference>
<dbReference type="GO" id="GO:0005576">
    <property type="term" value="C:extracellular region"/>
    <property type="evidence" value="ECO:0007669"/>
    <property type="project" value="UniProtKB-SubCell"/>
</dbReference>
<dbReference type="GO" id="GO:0004197">
    <property type="term" value="F:cysteine-type endopeptidase activity"/>
    <property type="evidence" value="ECO:0007669"/>
    <property type="project" value="InterPro"/>
</dbReference>
<dbReference type="GO" id="GO:0006508">
    <property type="term" value="P:proteolysis"/>
    <property type="evidence" value="ECO:0007669"/>
    <property type="project" value="UniProtKB-KW"/>
</dbReference>
<dbReference type="CDD" id="cd20498">
    <property type="entry name" value="C58_YopT"/>
    <property type="match status" value="1"/>
</dbReference>
<dbReference type="Gene3D" id="3.90.70.20">
    <property type="match status" value="1"/>
</dbReference>
<dbReference type="InterPro" id="IPR038765">
    <property type="entry name" value="Papain-like_cys_pep_sf"/>
</dbReference>
<dbReference type="InterPro" id="IPR003951">
    <property type="entry name" value="Peptidase_C58"/>
</dbReference>
<dbReference type="InterPro" id="IPR006473">
    <property type="entry name" value="Peptidase_C58_Yopt"/>
</dbReference>
<dbReference type="NCBIfam" id="TIGR01586">
    <property type="entry name" value="yopT_cys_prot"/>
    <property type="match status" value="1"/>
</dbReference>
<dbReference type="Pfam" id="PF03543">
    <property type="entry name" value="Peptidase_C58"/>
    <property type="match status" value="1"/>
</dbReference>
<dbReference type="PRINTS" id="PR01376">
    <property type="entry name" value="BACSURFANTGN"/>
</dbReference>
<dbReference type="SUPFAM" id="SSF54001">
    <property type="entry name" value="Cysteine proteinases"/>
    <property type="match status" value="1"/>
</dbReference>
<sequence>MNSIHGHYHIQLSNYSAGENLQSATLTEGVIGAHRVKVETALSHSNLQKKLSATIKHNQSGRSMLDRKLTSDGKANQRSSFTFSMIMYRMIHFVLSTRVPAVRESVANYGGNINFKFAQTKGAFLHKIIKHSDTASGVCEALCAHWIRSHAQGQSLFDQLYVGGRKGKFQIDTLYSIKQLQIDGCKADVDQDEVTLDWFKKNGISERMIERHCLLRPVDVTGTTESEGLDQLLNAILDTHGIGYGYKKIHLSGQMSAHAIAAYVNEKSGVTFFDPNFGEFHFSDKEKFRKWFTNSFWDNSMYHYPLGVGQRFRVLTFDSKEV</sequence>